<proteinExistence type="inferred from homology"/>
<accession>A1TZ54</accession>
<feature type="chain" id="PRO_0000351876" description="Protein-L-isoaspartate O-methyltransferase 1">
    <location>
        <begin position="1"/>
        <end position="218"/>
    </location>
</feature>
<feature type="active site" evidence="1">
    <location>
        <position position="69"/>
    </location>
</feature>
<organism>
    <name type="scientific">Marinobacter nauticus (strain ATCC 700491 / DSM 11845 / VT8)</name>
    <name type="common">Marinobacter aquaeolei</name>
    <dbReference type="NCBI Taxonomy" id="351348"/>
    <lineage>
        <taxon>Bacteria</taxon>
        <taxon>Pseudomonadati</taxon>
        <taxon>Pseudomonadota</taxon>
        <taxon>Gammaproteobacteria</taxon>
        <taxon>Pseudomonadales</taxon>
        <taxon>Marinobacteraceae</taxon>
        <taxon>Marinobacter</taxon>
    </lineage>
</organism>
<dbReference type="EC" id="2.1.1.77" evidence="1"/>
<dbReference type="EMBL" id="CP000514">
    <property type="protein sequence ID" value="ABM18023.1"/>
    <property type="molecule type" value="Genomic_DNA"/>
</dbReference>
<dbReference type="RefSeq" id="WP_011784443.1">
    <property type="nucleotide sequence ID" value="NC_008740.1"/>
</dbReference>
<dbReference type="SMR" id="A1TZ54"/>
<dbReference type="STRING" id="351348.Maqu_0927"/>
<dbReference type="KEGG" id="maq:Maqu_0927"/>
<dbReference type="eggNOG" id="COG2518">
    <property type="taxonomic scope" value="Bacteria"/>
</dbReference>
<dbReference type="HOGENOM" id="CLU_055432_2_0_6"/>
<dbReference type="OrthoDB" id="9810066at2"/>
<dbReference type="Proteomes" id="UP000000998">
    <property type="component" value="Chromosome"/>
</dbReference>
<dbReference type="GO" id="GO:0005737">
    <property type="term" value="C:cytoplasm"/>
    <property type="evidence" value="ECO:0007669"/>
    <property type="project" value="UniProtKB-SubCell"/>
</dbReference>
<dbReference type="GO" id="GO:0004719">
    <property type="term" value="F:protein-L-isoaspartate (D-aspartate) O-methyltransferase activity"/>
    <property type="evidence" value="ECO:0007669"/>
    <property type="project" value="UniProtKB-UniRule"/>
</dbReference>
<dbReference type="GO" id="GO:0032259">
    <property type="term" value="P:methylation"/>
    <property type="evidence" value="ECO:0007669"/>
    <property type="project" value="UniProtKB-KW"/>
</dbReference>
<dbReference type="GO" id="GO:0036211">
    <property type="term" value="P:protein modification process"/>
    <property type="evidence" value="ECO:0007669"/>
    <property type="project" value="UniProtKB-UniRule"/>
</dbReference>
<dbReference type="GO" id="GO:0030091">
    <property type="term" value="P:protein repair"/>
    <property type="evidence" value="ECO:0007669"/>
    <property type="project" value="UniProtKB-UniRule"/>
</dbReference>
<dbReference type="CDD" id="cd02440">
    <property type="entry name" value="AdoMet_MTases"/>
    <property type="match status" value="1"/>
</dbReference>
<dbReference type="FunFam" id="3.40.50.150:FF:000010">
    <property type="entry name" value="Protein-L-isoaspartate O-methyltransferase"/>
    <property type="match status" value="1"/>
</dbReference>
<dbReference type="Gene3D" id="3.40.50.150">
    <property type="entry name" value="Vaccinia Virus protein VP39"/>
    <property type="match status" value="1"/>
</dbReference>
<dbReference type="HAMAP" id="MF_00090">
    <property type="entry name" value="PIMT"/>
    <property type="match status" value="1"/>
</dbReference>
<dbReference type="InterPro" id="IPR000682">
    <property type="entry name" value="PCMT"/>
</dbReference>
<dbReference type="InterPro" id="IPR029063">
    <property type="entry name" value="SAM-dependent_MTases_sf"/>
</dbReference>
<dbReference type="NCBIfam" id="TIGR00080">
    <property type="entry name" value="pimt"/>
    <property type="match status" value="1"/>
</dbReference>
<dbReference type="NCBIfam" id="NF001453">
    <property type="entry name" value="PRK00312.1"/>
    <property type="match status" value="1"/>
</dbReference>
<dbReference type="PANTHER" id="PTHR11579">
    <property type="entry name" value="PROTEIN-L-ISOASPARTATE O-METHYLTRANSFERASE"/>
    <property type="match status" value="1"/>
</dbReference>
<dbReference type="PANTHER" id="PTHR11579:SF0">
    <property type="entry name" value="PROTEIN-L-ISOASPARTATE(D-ASPARTATE) O-METHYLTRANSFERASE"/>
    <property type="match status" value="1"/>
</dbReference>
<dbReference type="Pfam" id="PF01135">
    <property type="entry name" value="PCMT"/>
    <property type="match status" value="1"/>
</dbReference>
<dbReference type="SUPFAM" id="SSF53335">
    <property type="entry name" value="S-adenosyl-L-methionine-dependent methyltransferases"/>
    <property type="match status" value="1"/>
</dbReference>
<dbReference type="PROSITE" id="PS01279">
    <property type="entry name" value="PCMT"/>
    <property type="match status" value="1"/>
</dbReference>
<comment type="function">
    <text evidence="1">Catalyzes the methyl esterification of L-isoaspartyl residues in peptides and proteins that result from spontaneous decomposition of normal L-aspartyl and L-asparaginyl residues. It plays a role in the repair and/or degradation of damaged proteins.</text>
</comment>
<comment type="catalytic activity">
    <reaction evidence="1">
        <text>[protein]-L-isoaspartate + S-adenosyl-L-methionine = [protein]-L-isoaspartate alpha-methyl ester + S-adenosyl-L-homocysteine</text>
        <dbReference type="Rhea" id="RHEA:12705"/>
        <dbReference type="Rhea" id="RHEA-COMP:12143"/>
        <dbReference type="Rhea" id="RHEA-COMP:12144"/>
        <dbReference type="ChEBI" id="CHEBI:57856"/>
        <dbReference type="ChEBI" id="CHEBI:59789"/>
        <dbReference type="ChEBI" id="CHEBI:90596"/>
        <dbReference type="ChEBI" id="CHEBI:90598"/>
        <dbReference type="EC" id="2.1.1.77"/>
    </reaction>
</comment>
<comment type="subcellular location">
    <subcellularLocation>
        <location evidence="1">Cytoplasm</location>
    </subcellularLocation>
</comment>
<comment type="similarity">
    <text evidence="1">Belongs to the methyltransferase superfamily. L-isoaspartyl/D-aspartyl protein methyltransferase family.</text>
</comment>
<gene>
    <name evidence="1" type="primary">pcm1</name>
    <name type="ordered locus">Maqu_0927</name>
</gene>
<name>PIMT1_MARN8</name>
<sequence length="218" mass="24389">MTAQLEGIGMTSRRTRMRLVQRLREGGIESDRVLEVIGQVPRHIFLDEALSHRAYEDTSLPIGHGQTLSQPYIVARMTELLLAHAPQRVLELGTGSGYQTAVLSQLFPEIYSVERIRPLQDRARDRLRQLNVRNVLLKHADGGMGWPERGPFDGIIVTAAPVEVPRELLDQLADGGVLIAPVGEENQVLVEIIRKGNHFERHNLEPVHFVPLLGGVIR</sequence>
<evidence type="ECO:0000255" key="1">
    <source>
        <dbReference type="HAMAP-Rule" id="MF_00090"/>
    </source>
</evidence>
<reference key="1">
    <citation type="journal article" date="2011" name="Appl. Environ. Microbiol.">
        <title>Genomic potential of Marinobacter aquaeolei, a biogeochemical 'opportunitroph'.</title>
        <authorList>
            <person name="Singer E."/>
            <person name="Webb E.A."/>
            <person name="Nelson W.C."/>
            <person name="Heidelberg J.F."/>
            <person name="Ivanova N."/>
            <person name="Pati A."/>
            <person name="Edwards K.J."/>
        </authorList>
    </citation>
    <scope>NUCLEOTIDE SEQUENCE [LARGE SCALE GENOMIC DNA]</scope>
    <source>
        <strain>ATCC 700491 / DSM 11845 / VT8</strain>
    </source>
</reference>
<protein>
    <recommendedName>
        <fullName evidence="1">Protein-L-isoaspartate O-methyltransferase 1</fullName>
        <ecNumber evidence="1">2.1.1.77</ecNumber>
    </recommendedName>
    <alternativeName>
        <fullName evidence="1">L-isoaspartyl protein carboxyl methyltransferase 1</fullName>
    </alternativeName>
    <alternativeName>
        <fullName evidence="1">Protein L-isoaspartyl methyltransferase 1</fullName>
    </alternativeName>
    <alternativeName>
        <fullName evidence="1">Protein-beta-aspartate methyltransferase 1</fullName>
        <shortName evidence="1">PIMT 1</shortName>
    </alternativeName>
</protein>
<keyword id="KW-0963">Cytoplasm</keyword>
<keyword id="KW-0489">Methyltransferase</keyword>
<keyword id="KW-0949">S-adenosyl-L-methionine</keyword>
<keyword id="KW-0808">Transferase</keyword>